<sequence>MRNLKLFRTLEFRDIQGPGNPQCFSLRTEQGTVLIGSEHGLIEVDPVSREVKNEVSLVAEGFLPEDGSGRIVGVQDLLDQESVCVATASGDVILCSLSTQQLECVGSVASGISVMSWSPDQELVLLATGQQTLIMMTKDFEPILEQQIHQDDFGESKFITVGWGRKETQFHGSEGRQAAFQMQMHESALPWDDHRPQVTWRGDGQFFAVSVVCPETGARKVRVWNREFALQSTSEPVAGLGPALAWKPSGSLIASTQDKPNQQDIVFFEKNGLLHGHFTLPFLKDEVKVNDLLWNADSSVLAVWLEDLQREESSIPKTCVQLWTVGNYHWYLKQSLSFSTCGKSKIVSLMWDPVTPYRLHVLCQGWHYLAYDWHWTTDRSVGDNSSDLSNVAVIDGNRVLVTVFRQTVVPPPMCTYQLLFPHPVNQVTFLAHPQKSNDLAVLDASNQISVYKCGDCPSADPTVKLGAVGGSGFKVCLRTPHLEKRYKIQFENNEDQDVNPLKLGLLTWIEEDVFLAVSHSEFSPRSVIHHLTAASSEMDEEHGQLNVSSSAAVDGVIISLCCNSKTKSVVLQLADGQIFKYLWESPSLAIKPWKNSGGFPVRFPYPCTQTELAMIGEEECVLGLTDRCRFFINDIEVASNITSFAVYDEFLLLTTHSHTCQCFCLRDASFKTLQAGLSSNHVSHGEVLRKVERGSRIVTVVPQDTKLVLQMPRGNLEVVHHRALVLAQIRKWLDKLMFKEAFECMRKLRINLNLIYDHNPKVFLGNVETFIKQIDSVNHINLFFTELKEEDVTKTMYPAPVTSSVYLSRDPDGNKIDLVCDAMRAVMESINPHKYCLSILTSHVKKTTPELEIVLQKVHELQGNAPSDPDAVSAEEALKYLLHLVDVNELYDHSLGTYDFDLVLMVAEKSQKDPKEYLPFLNTLKKMETNYQRFTIDKYLKRYEKAIGHLSKCGPEYFPECLNLIKDKNLYNEALKLYSPSSQQYQDISIAYGEHLMQEHMYEPAGLMFARCGAHEKALSAFLTCGNWKQALCVAAQLNFTKDQLVGLGRTLAGKLVEQRKHIDAAMVLEECAQDYEEAVLLLLEGAAWEEALRLVYKYNRLDIIETNVKPSILEAQKNYMAFLDSQTATFSRHKKRLLVVRELKEQAQQAGLDDEVPHGQESDLFSETSSVVSGSEMSGKYSHSNSRISARSSKNRRKAERKKHSLKEGSPLEDLALLEALSEVVQNTENLKDEVYHILKVLFLFEFDEQGRELQKAFEDTLQLMERSLPEIWTLTYQQNSATPVLGPNSTANSIMASYQQQKTSVPVLDAELFIPPKINRRTQWKLSLLD</sequence>
<proteinExistence type="evidence at protein level"/>
<protein>
    <recommendedName>
        <fullName>Elongator complex protein 1</fullName>
        <shortName>ELP1</shortName>
    </recommendedName>
    <alternativeName>
        <fullName evidence="15">IkappaB kinase complex-associated protein</fullName>
        <shortName evidence="15">IKK complex-associated protein</shortName>
    </alternativeName>
    <alternativeName>
        <fullName>p150</fullName>
    </alternativeName>
</protein>
<gene>
    <name evidence="20" type="primary">ELP1</name>
    <name evidence="15" type="synonym">IKAP</name>
    <name type="synonym">IKBKAP</name>
</gene>
<reference key="1">
    <citation type="journal article" date="1998" name="Nature">
        <title>IKAP is a scaffold protein of the IkappaB kinase complex.</title>
        <authorList>
            <person name="Cohen L."/>
            <person name="Henzel W.J."/>
            <person name="Baeuerle P.A."/>
        </authorList>
    </citation>
    <scope>NUCLEOTIDE SEQUENCE [MRNA]</scope>
    <scope>PARTIAL PROTEIN SEQUENCE</scope>
    <scope>FUNCTION</scope>
    <scope>VARIANT LYS-312</scope>
    <source>
        <tissue>Cervix carcinoma</tissue>
    </source>
</reference>
<reference key="2">
    <citation type="journal article" date="2001" name="Am. J. Hum. Genet.">
        <title>Tissue-specific expression of a splicing mutation in the IKBKAP gene causes familial dysautonomia.</title>
        <authorList>
            <person name="Slaugenhaupt S.A."/>
            <person name="Blumenfeld A."/>
            <person name="Gill S.P."/>
            <person name="Leyne M."/>
            <person name="Mull J."/>
            <person name="Cuajungco M.P."/>
            <person name="Liebert C.B."/>
            <person name="Chadwick B.P."/>
            <person name="Idelson M."/>
            <person name="Reznik L."/>
            <person name="Robbins C.M."/>
            <person name="Makalowska I."/>
            <person name="Brownstein M.J."/>
            <person name="Krappmann D."/>
            <person name="Scheidereit C."/>
            <person name="Maayan C."/>
            <person name="Axelrod F.B."/>
            <person name="Gusella J.F."/>
        </authorList>
    </citation>
    <scope>NUCLEOTIDE SEQUENCE [MRNA]</scope>
    <scope>VARIANT HSAN3 PRO-696</scope>
    <scope>VARIANT SER-1072</scope>
</reference>
<reference key="3">
    <citation type="journal article" date="2004" name="Nat. Genet.">
        <title>Complete sequencing and characterization of 21,243 full-length human cDNAs.</title>
        <authorList>
            <person name="Ota T."/>
            <person name="Suzuki Y."/>
            <person name="Nishikawa T."/>
            <person name="Otsuki T."/>
            <person name="Sugiyama T."/>
            <person name="Irie R."/>
            <person name="Wakamatsu A."/>
            <person name="Hayashi K."/>
            <person name="Sato H."/>
            <person name="Nagai K."/>
            <person name="Kimura K."/>
            <person name="Makita H."/>
            <person name="Sekine M."/>
            <person name="Obayashi M."/>
            <person name="Nishi T."/>
            <person name="Shibahara T."/>
            <person name="Tanaka T."/>
            <person name="Ishii S."/>
            <person name="Yamamoto J."/>
            <person name="Saito K."/>
            <person name="Kawai Y."/>
            <person name="Isono Y."/>
            <person name="Nakamura Y."/>
            <person name="Nagahari K."/>
            <person name="Murakami K."/>
            <person name="Yasuda T."/>
            <person name="Iwayanagi T."/>
            <person name="Wagatsuma M."/>
            <person name="Shiratori A."/>
            <person name="Sudo H."/>
            <person name="Hosoiri T."/>
            <person name="Kaku Y."/>
            <person name="Kodaira H."/>
            <person name="Kondo H."/>
            <person name="Sugawara M."/>
            <person name="Takahashi M."/>
            <person name="Kanda K."/>
            <person name="Yokoi T."/>
            <person name="Furuya T."/>
            <person name="Kikkawa E."/>
            <person name="Omura Y."/>
            <person name="Abe K."/>
            <person name="Kamihara K."/>
            <person name="Katsuta N."/>
            <person name="Sato K."/>
            <person name="Tanikawa M."/>
            <person name="Yamazaki M."/>
            <person name="Ninomiya K."/>
            <person name="Ishibashi T."/>
            <person name="Yamashita H."/>
            <person name="Murakawa K."/>
            <person name="Fujimori K."/>
            <person name="Tanai H."/>
            <person name="Kimata M."/>
            <person name="Watanabe M."/>
            <person name="Hiraoka S."/>
            <person name="Chiba Y."/>
            <person name="Ishida S."/>
            <person name="Ono Y."/>
            <person name="Takiguchi S."/>
            <person name="Watanabe S."/>
            <person name="Yosida M."/>
            <person name="Hotuta T."/>
            <person name="Kusano J."/>
            <person name="Kanehori K."/>
            <person name="Takahashi-Fujii A."/>
            <person name="Hara H."/>
            <person name="Tanase T.-O."/>
            <person name="Nomura Y."/>
            <person name="Togiya S."/>
            <person name="Komai F."/>
            <person name="Hara R."/>
            <person name="Takeuchi K."/>
            <person name="Arita M."/>
            <person name="Imose N."/>
            <person name="Musashino K."/>
            <person name="Yuuki H."/>
            <person name="Oshima A."/>
            <person name="Sasaki N."/>
            <person name="Aotsuka S."/>
            <person name="Yoshikawa Y."/>
            <person name="Matsunawa H."/>
            <person name="Ichihara T."/>
            <person name="Shiohata N."/>
            <person name="Sano S."/>
            <person name="Moriya S."/>
            <person name="Momiyama H."/>
            <person name="Satoh N."/>
            <person name="Takami S."/>
            <person name="Terashima Y."/>
            <person name="Suzuki O."/>
            <person name="Nakagawa S."/>
            <person name="Senoh A."/>
            <person name="Mizoguchi H."/>
            <person name="Goto Y."/>
            <person name="Shimizu F."/>
            <person name="Wakebe H."/>
            <person name="Hishigaki H."/>
            <person name="Watanabe T."/>
            <person name="Sugiyama A."/>
            <person name="Takemoto M."/>
            <person name="Kawakami B."/>
            <person name="Yamazaki M."/>
            <person name="Watanabe K."/>
            <person name="Kumagai A."/>
            <person name="Itakura S."/>
            <person name="Fukuzumi Y."/>
            <person name="Fujimori Y."/>
            <person name="Komiyama M."/>
            <person name="Tashiro H."/>
            <person name="Tanigami A."/>
            <person name="Fujiwara T."/>
            <person name="Ono T."/>
            <person name="Yamada K."/>
            <person name="Fujii Y."/>
            <person name="Ozaki K."/>
            <person name="Hirao M."/>
            <person name="Ohmori Y."/>
            <person name="Kawabata A."/>
            <person name="Hikiji T."/>
            <person name="Kobatake N."/>
            <person name="Inagaki H."/>
            <person name="Ikema Y."/>
            <person name="Okamoto S."/>
            <person name="Okitani R."/>
            <person name="Kawakami T."/>
            <person name="Noguchi S."/>
            <person name="Itoh T."/>
            <person name="Shigeta K."/>
            <person name="Senba T."/>
            <person name="Matsumura K."/>
            <person name="Nakajima Y."/>
            <person name="Mizuno T."/>
            <person name="Morinaga M."/>
            <person name="Sasaki M."/>
            <person name="Togashi T."/>
            <person name="Oyama M."/>
            <person name="Hata H."/>
            <person name="Watanabe M."/>
            <person name="Komatsu T."/>
            <person name="Mizushima-Sugano J."/>
            <person name="Satoh T."/>
            <person name="Shirai Y."/>
            <person name="Takahashi Y."/>
            <person name="Nakagawa K."/>
            <person name="Okumura K."/>
            <person name="Nagase T."/>
            <person name="Nomura N."/>
            <person name="Kikuchi H."/>
            <person name="Masuho Y."/>
            <person name="Yamashita R."/>
            <person name="Nakai K."/>
            <person name="Yada T."/>
            <person name="Nakamura Y."/>
            <person name="Ohara O."/>
            <person name="Isogai T."/>
            <person name="Sugano S."/>
        </authorList>
    </citation>
    <scope>NUCLEOTIDE SEQUENCE [LARGE SCALE MRNA]</scope>
    <source>
        <tissue>Hippocampus</tissue>
    </source>
</reference>
<reference key="4">
    <citation type="journal article" date="2004" name="Nature">
        <title>DNA sequence and analysis of human chromosome 9.</title>
        <authorList>
            <person name="Humphray S.J."/>
            <person name="Oliver K."/>
            <person name="Hunt A.R."/>
            <person name="Plumb R.W."/>
            <person name="Loveland J.E."/>
            <person name="Howe K.L."/>
            <person name="Andrews T.D."/>
            <person name="Searle S."/>
            <person name="Hunt S.E."/>
            <person name="Scott C.E."/>
            <person name="Jones M.C."/>
            <person name="Ainscough R."/>
            <person name="Almeida J.P."/>
            <person name="Ambrose K.D."/>
            <person name="Ashwell R.I.S."/>
            <person name="Babbage A.K."/>
            <person name="Babbage S."/>
            <person name="Bagguley C.L."/>
            <person name="Bailey J."/>
            <person name="Banerjee R."/>
            <person name="Barker D.J."/>
            <person name="Barlow K.F."/>
            <person name="Bates K."/>
            <person name="Beasley H."/>
            <person name="Beasley O."/>
            <person name="Bird C.P."/>
            <person name="Bray-Allen S."/>
            <person name="Brown A.J."/>
            <person name="Brown J.Y."/>
            <person name="Burford D."/>
            <person name="Burrill W."/>
            <person name="Burton J."/>
            <person name="Carder C."/>
            <person name="Carter N.P."/>
            <person name="Chapman J.C."/>
            <person name="Chen Y."/>
            <person name="Clarke G."/>
            <person name="Clark S.Y."/>
            <person name="Clee C.M."/>
            <person name="Clegg S."/>
            <person name="Collier R.E."/>
            <person name="Corby N."/>
            <person name="Crosier M."/>
            <person name="Cummings A.T."/>
            <person name="Davies J."/>
            <person name="Dhami P."/>
            <person name="Dunn M."/>
            <person name="Dutta I."/>
            <person name="Dyer L.W."/>
            <person name="Earthrowl M.E."/>
            <person name="Faulkner L."/>
            <person name="Fleming C.J."/>
            <person name="Frankish A."/>
            <person name="Frankland J.A."/>
            <person name="French L."/>
            <person name="Fricker D.G."/>
            <person name="Garner P."/>
            <person name="Garnett J."/>
            <person name="Ghori J."/>
            <person name="Gilbert J.G.R."/>
            <person name="Glison C."/>
            <person name="Grafham D.V."/>
            <person name="Gribble S."/>
            <person name="Griffiths C."/>
            <person name="Griffiths-Jones S."/>
            <person name="Grocock R."/>
            <person name="Guy J."/>
            <person name="Hall R.E."/>
            <person name="Hammond S."/>
            <person name="Harley J.L."/>
            <person name="Harrison E.S.I."/>
            <person name="Hart E.A."/>
            <person name="Heath P.D."/>
            <person name="Henderson C.D."/>
            <person name="Hopkins B.L."/>
            <person name="Howard P.J."/>
            <person name="Howden P.J."/>
            <person name="Huckle E."/>
            <person name="Johnson C."/>
            <person name="Johnson D."/>
            <person name="Joy A.A."/>
            <person name="Kay M."/>
            <person name="Keenan S."/>
            <person name="Kershaw J.K."/>
            <person name="Kimberley A.M."/>
            <person name="King A."/>
            <person name="Knights A."/>
            <person name="Laird G.K."/>
            <person name="Langford C."/>
            <person name="Lawlor S."/>
            <person name="Leongamornlert D.A."/>
            <person name="Leversha M."/>
            <person name="Lloyd C."/>
            <person name="Lloyd D.M."/>
            <person name="Lovell J."/>
            <person name="Martin S."/>
            <person name="Mashreghi-Mohammadi M."/>
            <person name="Matthews L."/>
            <person name="McLaren S."/>
            <person name="McLay K.E."/>
            <person name="McMurray A."/>
            <person name="Milne S."/>
            <person name="Nickerson T."/>
            <person name="Nisbett J."/>
            <person name="Nordsiek G."/>
            <person name="Pearce A.V."/>
            <person name="Peck A.I."/>
            <person name="Porter K.M."/>
            <person name="Pandian R."/>
            <person name="Pelan S."/>
            <person name="Phillimore B."/>
            <person name="Povey S."/>
            <person name="Ramsey Y."/>
            <person name="Rand V."/>
            <person name="Scharfe M."/>
            <person name="Sehra H.K."/>
            <person name="Shownkeen R."/>
            <person name="Sims S.K."/>
            <person name="Skuce C.D."/>
            <person name="Smith M."/>
            <person name="Steward C.A."/>
            <person name="Swarbreck D."/>
            <person name="Sycamore N."/>
            <person name="Tester J."/>
            <person name="Thorpe A."/>
            <person name="Tracey A."/>
            <person name="Tromans A."/>
            <person name="Thomas D.W."/>
            <person name="Wall M."/>
            <person name="Wallis J.M."/>
            <person name="West A.P."/>
            <person name="Whitehead S.L."/>
            <person name="Willey D.L."/>
            <person name="Williams S.A."/>
            <person name="Wilming L."/>
            <person name="Wray P.W."/>
            <person name="Young L."/>
            <person name="Ashurst J.L."/>
            <person name="Coulson A."/>
            <person name="Blocker H."/>
            <person name="Durbin R.M."/>
            <person name="Sulston J.E."/>
            <person name="Hubbard T."/>
            <person name="Jackson M.J."/>
            <person name="Bentley D.R."/>
            <person name="Beck S."/>
            <person name="Rogers J."/>
            <person name="Dunham I."/>
        </authorList>
    </citation>
    <scope>NUCLEOTIDE SEQUENCE [LARGE SCALE GENOMIC DNA]</scope>
</reference>
<reference key="5">
    <citation type="submission" date="2005-07" db="EMBL/GenBank/DDBJ databases">
        <authorList>
            <person name="Mural R.J."/>
            <person name="Istrail S."/>
            <person name="Sutton G.G."/>
            <person name="Florea L."/>
            <person name="Halpern A.L."/>
            <person name="Mobarry C.M."/>
            <person name="Lippert R."/>
            <person name="Walenz B."/>
            <person name="Shatkay H."/>
            <person name="Dew I."/>
            <person name="Miller J.R."/>
            <person name="Flanigan M.J."/>
            <person name="Edwards N.J."/>
            <person name="Bolanos R."/>
            <person name="Fasulo D."/>
            <person name="Halldorsson B.V."/>
            <person name="Hannenhalli S."/>
            <person name="Turner R."/>
            <person name="Yooseph S."/>
            <person name="Lu F."/>
            <person name="Nusskern D.R."/>
            <person name="Shue B.C."/>
            <person name="Zheng X.H."/>
            <person name="Zhong F."/>
            <person name="Delcher A.L."/>
            <person name="Huson D.H."/>
            <person name="Kravitz S.A."/>
            <person name="Mouchard L."/>
            <person name="Reinert K."/>
            <person name="Remington K.A."/>
            <person name="Clark A.G."/>
            <person name="Waterman M.S."/>
            <person name="Eichler E.E."/>
            <person name="Adams M.D."/>
            <person name="Hunkapiller M.W."/>
            <person name="Myers E.W."/>
            <person name="Venter J.C."/>
        </authorList>
    </citation>
    <scope>NUCLEOTIDE SEQUENCE [LARGE SCALE GENOMIC DNA]</scope>
</reference>
<reference key="6">
    <citation type="journal article" date="2007" name="BMC Genomics">
        <title>The full-ORF clone resource of the German cDNA consortium.</title>
        <authorList>
            <person name="Bechtel S."/>
            <person name="Rosenfelder H."/>
            <person name="Duda A."/>
            <person name="Schmidt C.P."/>
            <person name="Ernst U."/>
            <person name="Wellenreuther R."/>
            <person name="Mehrle A."/>
            <person name="Schuster C."/>
            <person name="Bahr A."/>
            <person name="Bloecker H."/>
            <person name="Heubner D."/>
            <person name="Hoerlein A."/>
            <person name="Michel G."/>
            <person name="Wedler H."/>
            <person name="Koehrer K."/>
            <person name="Ottenwaelder B."/>
            <person name="Poustka A."/>
            <person name="Wiemann S."/>
            <person name="Schupp I."/>
        </authorList>
    </citation>
    <scope>NUCLEOTIDE SEQUENCE [LARGE SCALE MRNA] OF 961-1332</scope>
    <scope>VARIANTS SER-1072 AND LEU-1158</scope>
    <source>
        <tissue>Brain</tissue>
    </source>
</reference>
<reference key="7">
    <citation type="journal article" date="2002" name="J. Biol. Chem.">
        <title>Purification and characterization of the human elongator complex.</title>
        <authorList>
            <person name="Hawkes N.A."/>
            <person name="Otero G."/>
            <person name="Winkler G.S."/>
            <person name="Marshall N."/>
            <person name="Dahmus M.E."/>
            <person name="Krappmann D."/>
            <person name="Scheidereit C."/>
            <person name="Thomas C.L."/>
            <person name="Schiavo G."/>
            <person name="Erdjument-Bromage H."/>
            <person name="Tempst P."/>
            <person name="Svejstrup J.Q."/>
        </authorList>
    </citation>
    <scope>IDENTIFICATION IN THE ELONGATOR COMPLEX</scope>
    <scope>SUBCELLULAR LOCATION</scope>
    <scope>IDENTIFICATION BY MASS SPECTROMETRY</scope>
</reference>
<reference key="8">
    <citation type="journal article" date="2002" name="Proc. Natl. Acad. Sci. U.S.A.">
        <title>Human Elongator facilitates RNA polymerase II transcription through chromatin.</title>
        <authorList>
            <person name="Kim J.H."/>
            <person name="Lane W.S."/>
            <person name="Reinberg D."/>
        </authorList>
    </citation>
    <scope>IDENTIFICATION IN THE ELONGATOR COMPLEX</scope>
    <scope>INTERACTION WITH ELP3</scope>
    <scope>SUBCELLULAR LOCATION</scope>
    <scope>IDENTIFICATION BY MASS SPECTROMETRY</scope>
</reference>
<reference key="9">
    <citation type="journal article" date="2008" name="Proc. Natl. Acad. Sci. U.S.A.">
        <title>A quantitative atlas of mitotic phosphorylation.</title>
        <authorList>
            <person name="Dephoure N."/>
            <person name="Zhou C."/>
            <person name="Villen J."/>
            <person name="Beausoleil S.A."/>
            <person name="Bakalarski C.E."/>
            <person name="Elledge S.J."/>
            <person name="Gygi S.P."/>
        </authorList>
    </citation>
    <scope>PHOSPHORYLATION [LARGE SCALE ANALYSIS] AT SER-867; SER-1171 AND SER-1174</scope>
    <scope>IDENTIFICATION BY MASS SPECTROMETRY [LARGE SCALE ANALYSIS]</scope>
    <source>
        <tissue>Cervix carcinoma</tissue>
    </source>
</reference>
<reference key="10">
    <citation type="journal article" date="2010" name="Sci. Signal.">
        <title>Quantitative phosphoproteomics reveals widespread full phosphorylation site occupancy during mitosis.</title>
        <authorList>
            <person name="Olsen J.V."/>
            <person name="Vermeulen M."/>
            <person name="Santamaria A."/>
            <person name="Kumar C."/>
            <person name="Miller M.L."/>
            <person name="Jensen L.J."/>
            <person name="Gnad F."/>
            <person name="Cox J."/>
            <person name="Jensen T.S."/>
            <person name="Nigg E.A."/>
            <person name="Brunak S."/>
            <person name="Mann M."/>
        </authorList>
    </citation>
    <scope>PHOSPHORYLATION [LARGE SCALE ANALYSIS] AT SER-867</scope>
    <scope>IDENTIFICATION BY MASS SPECTROMETRY [LARGE SCALE ANALYSIS]</scope>
    <source>
        <tissue>Cervix carcinoma</tissue>
    </source>
</reference>
<reference key="11">
    <citation type="journal article" date="2011" name="BMC Syst. Biol.">
        <title>Initial characterization of the human central proteome.</title>
        <authorList>
            <person name="Burkard T.R."/>
            <person name="Planyavsky M."/>
            <person name="Kaupe I."/>
            <person name="Breitwieser F.P."/>
            <person name="Buerckstuemmer T."/>
            <person name="Bennett K.L."/>
            <person name="Superti-Furga G."/>
            <person name="Colinge J."/>
        </authorList>
    </citation>
    <scope>IDENTIFICATION BY MASS SPECTROMETRY [LARGE SCALE ANALYSIS]</scope>
</reference>
<reference key="12">
    <citation type="journal article" date="2012" name="J. Biol. Chem.">
        <title>DERP6 (ELP5) and C3ORF75 (ELP6) regulate tumorigenicity and migration of melanoma cells as subunits of Elongator.</title>
        <authorList>
            <person name="Close P."/>
            <person name="Gillard M."/>
            <person name="Ladang A."/>
            <person name="Jiang Z."/>
            <person name="Papuga J."/>
            <person name="Hawkes N."/>
            <person name="Nguyen L."/>
            <person name="Chapelle J.P."/>
            <person name="Bouillenne F."/>
            <person name="Svejstrup J."/>
            <person name="Fillet M."/>
            <person name="Chariot A."/>
        </authorList>
    </citation>
    <scope>IDENTIFICATION IN THE ELONGATOR COMPLEX</scope>
    <scope>SUBCELLULAR LOCATION</scope>
</reference>
<reference key="13">
    <citation type="journal article" date="2013" name="J. Proteome Res.">
        <title>Toward a comprehensive characterization of a human cancer cell phosphoproteome.</title>
        <authorList>
            <person name="Zhou H."/>
            <person name="Di Palma S."/>
            <person name="Preisinger C."/>
            <person name="Peng M."/>
            <person name="Polat A.N."/>
            <person name="Heck A.J."/>
            <person name="Mohammed S."/>
        </authorList>
    </citation>
    <scope>PHOSPHORYLATION [LARGE SCALE ANALYSIS] AT SER-471; SER-804 AND SER-867</scope>
    <scope>IDENTIFICATION BY MASS SPECTROMETRY [LARGE SCALE ANALYSIS]</scope>
    <source>
        <tissue>Cervix carcinoma</tissue>
        <tissue>Erythroleukemia</tissue>
    </source>
</reference>
<reference key="14">
    <citation type="journal article" date="2014" name="J. Proteomics">
        <title>An enzyme assisted RP-RPLC approach for in-depth analysis of human liver phosphoproteome.</title>
        <authorList>
            <person name="Bian Y."/>
            <person name="Song C."/>
            <person name="Cheng K."/>
            <person name="Dong M."/>
            <person name="Wang F."/>
            <person name="Huang J."/>
            <person name="Sun D."/>
            <person name="Wang L."/>
            <person name="Ye M."/>
            <person name="Zou H."/>
        </authorList>
    </citation>
    <scope>IDENTIFICATION BY MASS SPECTROMETRY [LARGE SCALE ANALYSIS]</scope>
    <source>
        <tissue>Liver</tissue>
    </source>
</reference>
<reference key="15">
    <citation type="journal article" date="2015" name="Structure">
        <title>The Elp2 subunit is essential for elongator complex assembly and functional regulation.</title>
        <authorList>
            <person name="Dong C."/>
            <person name="Lin Z."/>
            <person name="Diao W."/>
            <person name="Li D."/>
            <person name="Chu X."/>
            <person name="Wang Z."/>
            <person name="Zhou H."/>
            <person name="Xie Z."/>
            <person name="Shen Y."/>
            <person name="Long J."/>
        </authorList>
    </citation>
    <scope>INTERACTION WITH ELP2 AND ELP3</scope>
</reference>
<reference key="16">
    <citation type="journal article" date="2018" name="Cell. Mol. Life Sci.">
        <title>Structural insights into the function of Elongator.</title>
        <authorList>
            <person name="Dalwadi U."/>
            <person name="Yip C.K."/>
        </authorList>
    </citation>
    <scope>REVIEW</scope>
</reference>
<reference key="17">
    <citation type="journal article" date="2020" name="Nature">
        <title>Germline Elongator mutations in Sonic Hedgehog medulloblastoma.</title>
        <authorList>
            <person name="Waszak S.M."/>
            <person name="Robinson G.W."/>
            <person name="Gudenas B.L."/>
            <person name="Smith K.S."/>
            <person name="Forget A."/>
            <person name="Kojic M."/>
            <person name="Garcia-Lopez J."/>
            <person name="Hadley J."/>
            <person name="Hamilton K.V."/>
            <person name="Indersie E."/>
            <person name="Buchhalter I."/>
            <person name="Kerssemakers J."/>
            <person name="Jaeger N."/>
            <person name="Sharma T."/>
            <person name="Rausch T."/>
            <person name="Kool M."/>
            <person name="Sturm D."/>
            <person name="Jones D.T.W."/>
            <person name="Vasilyeva A."/>
            <person name="Tatevossian R.G."/>
            <person name="Neale G."/>
            <person name="Lombard B."/>
            <person name="Loew D."/>
            <person name="Nakitandwe J."/>
            <person name="Rusch M."/>
            <person name="Bowers D.C."/>
            <person name="Bendel A."/>
            <person name="Partap S."/>
            <person name="Chintagumpala M."/>
            <person name="Crawford J."/>
            <person name="Gottardo N.G."/>
            <person name="Smith A."/>
            <person name="Dufour C."/>
            <person name="Rutkowski S."/>
            <person name="Eggen T."/>
            <person name="Wesenberg F."/>
            <person name="Kjaerheim K."/>
            <person name="Feychting M."/>
            <person name="Lannering B."/>
            <person name="Schuez J."/>
            <person name="Johansen C."/>
            <person name="Andersen T.V."/>
            <person name="Roeoesli M."/>
            <person name="Kuehni C.E."/>
            <person name="Grotzer M."/>
            <person name="Remke M."/>
            <person name="Puget S."/>
            <person name="Pajtler K.W."/>
            <person name="Milde T."/>
            <person name="Witt O."/>
            <person name="Ryzhova M."/>
            <person name="Korshunov A."/>
            <person name="Orr B.A."/>
            <person name="Ellison D.W."/>
            <person name="Brugieres L."/>
            <person name="Lichter P."/>
            <person name="Nichols K.E."/>
            <person name="Gajjar A."/>
            <person name="Wainwright B.J."/>
            <person name="Ayrault O."/>
            <person name="Korbel J.O."/>
            <person name="Northcott P.A."/>
            <person name="Pfister S.M."/>
        </authorList>
    </citation>
    <scope>INVOLVEMENT IN MDB</scope>
</reference>
<reference evidence="21" key="18">
    <citation type="journal article" date="2015" name="Proc. Natl. Acad. Sci. U.S.A.">
        <title>Dimerization of elongator protein 1 is essential for Elongator complex assembly.</title>
        <authorList>
            <person name="Xu H."/>
            <person name="Lin Z."/>
            <person name="Li F."/>
            <person name="Diao W."/>
            <person name="Dong C."/>
            <person name="Zhou H."/>
            <person name="Xie X."/>
            <person name="Wang Z."/>
            <person name="Shen Y."/>
            <person name="Long J."/>
        </authorList>
    </citation>
    <scope>X-RAY CRYSTALLOGRAPHY (3.02 ANGSTROMS) OF 715-1332</scope>
    <scope>SUBUNIT</scope>
    <scope>IDENTIFICATION IN THE ELONGATOR COMPLEX</scope>
    <scope>DIMERIZATION REGION</scope>
    <scope>CHARACTERIZATION OF VARIANTS PRO-696; LEU-914; SER-1072 AND LEU-1158</scope>
    <scope>MUTAGENESIS OF ARG-1011</scope>
</reference>
<reference key="19">
    <citation type="journal article" date="2001" name="Am. J. Hum. Genet.">
        <title>Familial dysautonomia is caused by mutations of the IKAP gene.</title>
        <authorList>
            <person name="Anderson S.L."/>
            <person name="Coli R."/>
            <person name="Daly I.W."/>
            <person name="Kichula E.A."/>
            <person name="Rork M.J."/>
            <person name="Volpi S.A."/>
            <person name="Ekstein J."/>
            <person name="Rubin B.Y."/>
        </authorList>
    </citation>
    <scope>VARIANT HSAN3 PRO-696</scope>
    <scope>EFFECT ON PHOSPHORYLATION</scope>
</reference>
<reference key="20">
    <citation type="journal article" date="2003" name="Am. J. Med. Genet. A">
        <title>Identification of the first non-Jewish mutation in familial Dysautonomia.</title>
        <authorList>
            <person name="Leyne M."/>
            <person name="Mull J."/>
            <person name="Gill S.P."/>
            <person name="Cuajungco M.P."/>
            <person name="Oddoux C."/>
            <person name="Blumenfeld A."/>
            <person name="Maayan C."/>
            <person name="Gusella J.F."/>
            <person name="Axelrod F.B."/>
            <person name="Slaugenhaupt S.A."/>
        </authorList>
    </citation>
    <scope>VARIANT HSAN3 LEU-914</scope>
</reference>
<feature type="chain" id="PRO_0000084177" description="Elongator complex protein 1">
    <location>
        <begin position="1"/>
        <end position="1332"/>
    </location>
</feature>
<feature type="region of interest" description="Mediates dimerization" evidence="11">
    <location>
        <begin position="885"/>
        <end position="1332"/>
    </location>
</feature>
<feature type="region of interest" description="Disordered" evidence="3">
    <location>
        <begin position="1150"/>
        <end position="1208"/>
    </location>
</feature>
<feature type="region of interest" description="Required for binding to tRNA" evidence="1">
    <location>
        <begin position="1191"/>
        <end position="1209"/>
    </location>
</feature>
<feature type="compositionally biased region" description="Polar residues" evidence="3">
    <location>
        <begin position="1164"/>
        <end position="1177"/>
    </location>
</feature>
<feature type="compositionally biased region" description="Basic residues" evidence="3">
    <location>
        <begin position="1194"/>
        <end position="1206"/>
    </location>
</feature>
<feature type="modified residue" description="Phosphoserine" evidence="24">
    <location>
        <position position="471"/>
    </location>
</feature>
<feature type="modified residue" description="Phosphoserine" evidence="24">
    <location>
        <position position="804"/>
    </location>
</feature>
<feature type="modified residue" description="Phosphoserine" evidence="22 23 24">
    <location>
        <position position="867"/>
    </location>
</feature>
<feature type="modified residue" description="Phosphoserine" evidence="22">
    <location>
        <position position="1171"/>
    </location>
</feature>
<feature type="modified residue" description="Phosphoserine" evidence="22">
    <location>
        <position position="1174"/>
    </location>
</feature>
<feature type="sequence variant" id="VAR_047476" description="In dbSNP:rs3737311.">
    <original>R</original>
    <variation>C</variation>
    <location>
        <position position="70"/>
    </location>
</feature>
<feature type="sequence variant" id="VAR_047477" description="In dbSNP:rs10521092.">
    <original>M</original>
    <variation>K</variation>
    <location>
        <position position="182"/>
    </location>
</feature>
<feature type="sequence variant" id="VAR_047478" description="In dbSNP:rs1140064." evidence="13">
    <original>E</original>
    <variation>K</variation>
    <location>
        <position position="312"/>
    </location>
</feature>
<feature type="sequence variant" id="VAR_047479" description="In dbSNP:rs838827.">
    <original>R</original>
    <variation>Q</variation>
    <location>
        <position position="525"/>
    </location>
</feature>
<feature type="sequence variant" id="VAR_011327" description="In HSAN3; mild phenotype; phosphorylation is reduced; does not affect interaction with ELP2; reduced interaction with ELP3; does not affect dimerization; dbSNP:rs137853022." evidence="4 5 11">
    <original>R</original>
    <variation>P</variation>
    <location>
        <position position="696"/>
    </location>
</feature>
<feature type="sequence variant" id="VAR_047480" description="In dbSNP:rs2230792.">
    <original>G</original>
    <variation>E</variation>
    <location>
        <position position="765"/>
    </location>
</feature>
<feature type="sequence variant" id="VAR_047481" description="In dbSNP:rs2230793.">
    <original>I</original>
    <variation>L</variation>
    <location>
        <position position="816"/>
    </location>
</feature>
<feature type="sequence variant" id="VAR_047482" description="In dbSNP:rs2230794.">
    <original>I</original>
    <variation>M</variation>
    <location>
        <position position="830"/>
    </location>
</feature>
<feature type="sequence variant" id="VAR_047483" description="In dbSNP:rs10979599.">
    <original>T</original>
    <variation>N</variation>
    <location>
        <position position="848"/>
    </location>
</feature>
<feature type="sequence variant" id="VAR_085681" description="In HSAN3; reduced interaction with ELP2; does not affect interaction with ELP3; does not affect dimerization." evidence="8 11">
    <original>P</original>
    <variation>L</variation>
    <location>
        <position position="914"/>
    </location>
</feature>
<feature type="sequence variant" id="VAR_047484" description="In dbSNP:rs2230798.">
    <original>K</original>
    <variation>I</variation>
    <location>
        <position position="952"/>
    </location>
</feature>
<feature type="sequence variant" id="VAR_047485" description="In dbSNP:rs2230795.">
    <original>G</original>
    <variation>S</variation>
    <location>
        <position position="1013"/>
    </location>
</feature>
<feature type="sequence variant" id="VAR_047486" description="Reduced interaction with ELP2; does not affect interaction with ELP3; does not affect dimerization; dbSNP:rs3204145." evidence="4 9 11">
    <original>C</original>
    <variation>S</variation>
    <location>
        <position position="1072"/>
    </location>
</feature>
<feature type="sequence variant" id="VAR_047487" description="Reduced interaction with ELP2; does not affect interaction with ELP3; does not affect dimerization; dbSNP:rs1538660." evidence="9 11">
    <original>P</original>
    <variation>L</variation>
    <location>
        <position position="1158"/>
    </location>
</feature>
<feature type="mutagenesis site" description="Disruption of dimer formation, reduced protein stability and reduced interaction with ELP2 and ELP3. Does not affect binding to tRNA." evidence="11">
    <original>R</original>
    <variation>A</variation>
    <location>
        <position position="1011"/>
    </location>
</feature>
<feature type="sequence conflict" description="In Ref. 1; AAC64258." evidence="16" ref="1">
    <original>W</original>
    <variation>R</variation>
    <location>
        <position position="304"/>
    </location>
</feature>
<feature type="sequence conflict" description="In Ref. 1; AAC64258." evidence="16" ref="1">
    <original>L</original>
    <variation>P</variation>
    <location>
        <position position="754"/>
    </location>
</feature>
<feature type="sequence conflict" description="In Ref. 6; CAB43219." evidence="16" ref="6">
    <original>C</original>
    <variation>G</variation>
    <location>
        <position position="961"/>
    </location>
</feature>
<feature type="sequence conflict" description="In Ref. 6; CAB43219." evidence="16" ref="6">
    <original>I</original>
    <variation>V</variation>
    <location>
        <position position="1320"/>
    </location>
</feature>
<feature type="strand" evidence="26">
    <location>
        <begin position="3"/>
        <end position="12"/>
    </location>
</feature>
<feature type="strand" evidence="26">
    <location>
        <begin position="23"/>
        <end position="27"/>
    </location>
</feature>
<feature type="turn" evidence="26">
    <location>
        <begin position="28"/>
        <end position="31"/>
    </location>
</feature>
<feature type="strand" evidence="26">
    <location>
        <begin position="32"/>
        <end position="36"/>
    </location>
</feature>
<feature type="strand" evidence="26">
    <location>
        <begin position="38"/>
        <end position="45"/>
    </location>
</feature>
<feature type="turn" evidence="26">
    <location>
        <begin position="46"/>
        <end position="49"/>
    </location>
</feature>
<feature type="strand" evidence="26">
    <location>
        <begin position="50"/>
        <end position="57"/>
    </location>
</feature>
<feature type="turn" evidence="26">
    <location>
        <begin position="58"/>
        <end position="61"/>
    </location>
</feature>
<feature type="strand" evidence="26">
    <location>
        <begin position="65"/>
        <end position="67"/>
    </location>
</feature>
<feature type="strand" evidence="26">
    <location>
        <begin position="71"/>
        <end position="76"/>
    </location>
</feature>
<feature type="strand" evidence="26">
    <location>
        <begin position="80"/>
        <end position="87"/>
    </location>
</feature>
<feature type="turn" evidence="26">
    <location>
        <begin position="88"/>
        <end position="90"/>
    </location>
</feature>
<feature type="strand" evidence="26">
    <location>
        <begin position="91"/>
        <end position="99"/>
    </location>
</feature>
<feature type="strand" evidence="26">
    <location>
        <begin position="104"/>
        <end position="107"/>
    </location>
</feature>
<feature type="strand" evidence="26">
    <location>
        <begin position="112"/>
        <end position="117"/>
    </location>
</feature>
<feature type="strand" evidence="26">
    <location>
        <begin position="119"/>
        <end position="128"/>
    </location>
</feature>
<feature type="turn" evidence="26">
    <location>
        <begin position="129"/>
        <end position="131"/>
    </location>
</feature>
<feature type="strand" evidence="26">
    <location>
        <begin position="132"/>
        <end position="137"/>
    </location>
</feature>
<feature type="strand" evidence="26">
    <location>
        <begin position="142"/>
        <end position="148"/>
    </location>
</feature>
<feature type="strand" evidence="26">
    <location>
        <begin position="197"/>
        <end position="200"/>
    </location>
</feature>
<feature type="strand" evidence="26">
    <location>
        <begin position="202"/>
        <end position="212"/>
    </location>
</feature>
<feature type="turn" evidence="26">
    <location>
        <begin position="214"/>
        <end position="216"/>
    </location>
</feature>
<feature type="strand" evidence="26">
    <location>
        <begin position="217"/>
        <end position="225"/>
    </location>
</feature>
<feature type="strand" evidence="26">
    <location>
        <begin position="230"/>
        <end position="233"/>
    </location>
</feature>
<feature type="strand" evidence="26">
    <location>
        <begin position="257"/>
        <end position="259"/>
    </location>
</feature>
<feature type="strand" evidence="26">
    <location>
        <begin position="262"/>
        <end position="268"/>
    </location>
</feature>
<feature type="strand" evidence="26">
    <location>
        <begin position="277"/>
        <end position="279"/>
    </location>
</feature>
<feature type="strand" evidence="26">
    <location>
        <begin position="286"/>
        <end position="294"/>
    </location>
</feature>
<feature type="strand" evidence="26">
    <location>
        <begin position="296"/>
        <end position="298"/>
    </location>
</feature>
<feature type="strand" evidence="26">
    <location>
        <begin position="301"/>
        <end position="307"/>
    </location>
</feature>
<feature type="strand" evidence="27">
    <location>
        <begin position="311"/>
        <end position="313"/>
    </location>
</feature>
<feature type="strand" evidence="26">
    <location>
        <begin position="318"/>
        <end position="328"/>
    </location>
</feature>
<feature type="strand" evidence="26">
    <location>
        <begin position="330"/>
        <end position="338"/>
    </location>
</feature>
<feature type="strand" evidence="26">
    <location>
        <begin position="340"/>
        <end position="342"/>
    </location>
</feature>
<feature type="strand" evidence="26">
    <location>
        <begin position="346"/>
        <end position="351"/>
    </location>
</feature>
<feature type="strand" evidence="26">
    <location>
        <begin position="353"/>
        <end position="355"/>
    </location>
</feature>
<feature type="strand" evidence="26">
    <location>
        <begin position="358"/>
        <end position="366"/>
    </location>
</feature>
<feature type="strand" evidence="26">
    <location>
        <begin position="368"/>
        <end position="376"/>
    </location>
</feature>
<feature type="turn" evidence="26">
    <location>
        <begin position="384"/>
        <end position="386"/>
    </location>
</feature>
<feature type="strand" evidence="26">
    <location>
        <begin position="390"/>
        <end position="394"/>
    </location>
</feature>
<feature type="strand" evidence="26">
    <location>
        <begin position="396"/>
        <end position="403"/>
    </location>
</feature>
<feature type="turn" evidence="26">
    <location>
        <begin position="404"/>
        <end position="406"/>
    </location>
</feature>
<feature type="strand" evidence="27">
    <location>
        <begin position="411"/>
        <end position="413"/>
    </location>
</feature>
<feature type="strand" evidence="26">
    <location>
        <begin position="415"/>
        <end position="419"/>
    </location>
</feature>
<feature type="strand" evidence="26">
    <location>
        <begin position="424"/>
        <end position="429"/>
    </location>
</feature>
<feature type="strand" evidence="26">
    <location>
        <begin position="439"/>
        <end position="443"/>
    </location>
</feature>
<feature type="strand" evidence="26">
    <location>
        <begin position="446"/>
        <end position="452"/>
    </location>
</feature>
<feature type="strand" evidence="26">
    <location>
        <begin position="463"/>
        <end position="465"/>
    </location>
</feature>
<feature type="strand" evidence="26">
    <location>
        <begin position="470"/>
        <end position="472"/>
    </location>
</feature>
<feature type="strand" evidence="26">
    <location>
        <begin position="481"/>
        <end position="489"/>
    </location>
</feature>
<feature type="strand" evidence="26">
    <location>
        <begin position="491"/>
        <end position="493"/>
    </location>
</feature>
<feature type="strand" evidence="27">
    <location>
        <begin position="498"/>
        <end position="500"/>
    </location>
</feature>
<feature type="strand" evidence="26">
    <location>
        <begin position="504"/>
        <end position="510"/>
    </location>
</feature>
<feature type="strand" evidence="26">
    <location>
        <begin position="513"/>
        <end position="519"/>
    </location>
</feature>
<feature type="strand" evidence="26">
    <location>
        <begin position="521"/>
        <end position="534"/>
    </location>
</feature>
<feature type="strand" evidence="27">
    <location>
        <begin position="537"/>
        <end position="542"/>
    </location>
</feature>
<feature type="strand" evidence="26">
    <location>
        <begin position="543"/>
        <end position="555"/>
    </location>
</feature>
<feature type="strand" evidence="26">
    <location>
        <begin position="557"/>
        <end position="562"/>
    </location>
</feature>
<feature type="turn" evidence="26">
    <location>
        <begin position="564"/>
        <end position="566"/>
    </location>
</feature>
<feature type="strand" evidence="26">
    <location>
        <begin position="569"/>
        <end position="581"/>
    </location>
</feature>
<feature type="strand" evidence="26">
    <location>
        <begin position="583"/>
        <end position="587"/>
    </location>
</feature>
<feature type="strand" evidence="26">
    <location>
        <begin position="590"/>
        <end position="592"/>
    </location>
</feature>
<feature type="strand" evidence="26">
    <location>
        <begin position="608"/>
        <end position="615"/>
    </location>
</feature>
<feature type="strand" evidence="26">
    <location>
        <begin position="618"/>
        <end position="624"/>
    </location>
</feature>
<feature type="strand" evidence="26">
    <location>
        <begin position="630"/>
        <end position="632"/>
    </location>
</feature>
<feature type="strand" evidence="26">
    <location>
        <begin position="635"/>
        <end position="646"/>
    </location>
</feature>
<feature type="strand" evidence="26">
    <location>
        <begin position="648"/>
        <end position="655"/>
    </location>
</feature>
<feature type="strand" evidence="26">
    <location>
        <begin position="658"/>
        <end position="664"/>
    </location>
</feature>
<feature type="helix" evidence="26">
    <location>
        <begin position="670"/>
        <end position="676"/>
    </location>
</feature>
<feature type="strand" evidence="26">
    <location>
        <begin position="687"/>
        <end position="690"/>
    </location>
</feature>
<feature type="strand" evidence="26">
    <location>
        <begin position="696"/>
        <end position="701"/>
    </location>
</feature>
<feature type="turn" evidence="26">
    <location>
        <begin position="702"/>
        <end position="705"/>
    </location>
</feature>
<feature type="strand" evidence="26">
    <location>
        <begin position="706"/>
        <end position="710"/>
    </location>
</feature>
<feature type="strand" evidence="26">
    <location>
        <begin position="716"/>
        <end position="719"/>
    </location>
</feature>
<feature type="helix" evidence="26">
    <location>
        <begin position="722"/>
        <end position="734"/>
    </location>
</feature>
<feature type="helix" evidence="26">
    <location>
        <begin position="738"/>
        <end position="748"/>
    </location>
</feature>
<feature type="helix" evidence="26">
    <location>
        <begin position="754"/>
        <end position="757"/>
    </location>
</feature>
<feature type="helix" evidence="26">
    <location>
        <begin position="760"/>
        <end position="765"/>
    </location>
</feature>
<feature type="helix" evidence="26">
    <location>
        <begin position="767"/>
        <end position="774"/>
    </location>
</feature>
<feature type="helix" evidence="26">
    <location>
        <begin position="777"/>
        <end position="784"/>
    </location>
</feature>
<feature type="turn" evidence="26">
    <location>
        <begin position="792"/>
        <end position="796"/>
    </location>
</feature>
<feature type="helix" evidence="26">
    <location>
        <begin position="815"/>
        <end position="830"/>
    </location>
</feature>
<feature type="turn" evidence="26">
    <location>
        <begin position="832"/>
        <end position="834"/>
    </location>
</feature>
<feature type="helix" evidence="26">
    <location>
        <begin position="837"/>
        <end position="844"/>
    </location>
</feature>
<feature type="strand" evidence="26">
    <location>
        <begin position="846"/>
        <end position="848"/>
    </location>
</feature>
<feature type="helix" evidence="26">
    <location>
        <begin position="851"/>
        <end position="862"/>
    </location>
</feature>
<feature type="helix" evidence="25">
    <location>
        <begin position="868"/>
        <end position="870"/>
    </location>
</feature>
<feature type="helix" evidence="26">
    <location>
        <begin position="874"/>
        <end position="884"/>
    </location>
</feature>
<feature type="helix" evidence="26">
    <location>
        <begin position="887"/>
        <end position="896"/>
    </location>
</feature>
<feature type="helix" evidence="26">
    <location>
        <begin position="900"/>
        <end position="908"/>
    </location>
</feature>
<feature type="helix" evidence="26">
    <location>
        <begin position="914"/>
        <end position="925"/>
    </location>
</feature>
<feature type="helix" evidence="26">
    <location>
        <begin position="929"/>
        <end position="939"/>
    </location>
</feature>
<feature type="helix" evidence="26">
    <location>
        <begin position="943"/>
        <end position="951"/>
    </location>
</feature>
<feature type="helix" evidence="26">
    <location>
        <begin position="955"/>
        <end position="957"/>
    </location>
</feature>
<feature type="helix" evidence="26">
    <location>
        <begin position="958"/>
        <end position="968"/>
    </location>
</feature>
<feature type="helix" evidence="26">
    <location>
        <begin position="971"/>
        <end position="977"/>
    </location>
</feature>
<feature type="helix" evidence="26">
    <location>
        <begin position="983"/>
        <end position="999"/>
    </location>
</feature>
<feature type="helix" evidence="26">
    <location>
        <begin position="1002"/>
        <end position="1012"/>
    </location>
</feature>
<feature type="helix" evidence="26">
    <location>
        <begin position="1015"/>
        <end position="1025"/>
    </location>
</feature>
<feature type="helix" evidence="26">
    <location>
        <begin position="1028"/>
        <end position="1037"/>
    </location>
</feature>
<feature type="helix" evidence="26">
    <location>
        <begin position="1044"/>
        <end position="1058"/>
    </location>
</feature>
<feature type="helix" evidence="26">
    <location>
        <begin position="1062"/>
        <end position="1073"/>
    </location>
</feature>
<feature type="helix" evidence="26">
    <location>
        <begin position="1076"/>
        <end position="1085"/>
    </location>
</feature>
<feature type="helix" evidence="26">
    <location>
        <begin position="1090"/>
        <end position="1099"/>
    </location>
</feature>
<feature type="helix" evidence="26">
    <location>
        <begin position="1103"/>
        <end position="1107"/>
    </location>
</feature>
<feature type="helix" evidence="26">
    <location>
        <begin position="1109"/>
        <end position="1151"/>
    </location>
</feature>
<feature type="helix" evidence="26">
    <location>
        <begin position="1214"/>
        <end position="1231"/>
    </location>
</feature>
<feature type="helix" evidence="26">
    <location>
        <begin position="1233"/>
        <end position="1245"/>
    </location>
</feature>
<feature type="helix" evidence="26">
    <location>
        <begin position="1249"/>
        <end position="1273"/>
    </location>
</feature>
<feature type="turn" evidence="26">
    <location>
        <begin position="1329"/>
        <end position="1331"/>
    </location>
</feature>
<evidence type="ECO:0000250" key="1">
    <source>
        <dbReference type="UniProtKB" id="Q06706"/>
    </source>
</evidence>
<evidence type="ECO:0000250" key="2">
    <source>
        <dbReference type="UniProtKB" id="Q7TT37"/>
    </source>
</evidence>
<evidence type="ECO:0000256" key="3">
    <source>
        <dbReference type="SAM" id="MobiDB-lite"/>
    </source>
</evidence>
<evidence type="ECO:0000269" key="4">
    <source>
    </source>
</evidence>
<evidence type="ECO:0000269" key="5">
    <source>
    </source>
</evidence>
<evidence type="ECO:0000269" key="6">
    <source>
    </source>
</evidence>
<evidence type="ECO:0000269" key="7">
    <source>
    </source>
</evidence>
<evidence type="ECO:0000269" key="8">
    <source>
    </source>
</evidence>
<evidence type="ECO:0000269" key="9">
    <source>
    </source>
</evidence>
<evidence type="ECO:0000269" key="10">
    <source>
    </source>
</evidence>
<evidence type="ECO:0000269" key="11">
    <source>
    </source>
</evidence>
<evidence type="ECO:0000269" key="12">
    <source>
    </source>
</evidence>
<evidence type="ECO:0000269" key="13">
    <source>
    </source>
</evidence>
<evidence type="ECO:0000303" key="14">
    <source>
    </source>
</evidence>
<evidence type="ECO:0000303" key="15">
    <source>
    </source>
</evidence>
<evidence type="ECO:0000305" key="16"/>
<evidence type="ECO:0000305" key="17">
    <source>
    </source>
</evidence>
<evidence type="ECO:0000305" key="18">
    <source>
    </source>
</evidence>
<evidence type="ECO:0000305" key="19">
    <source>
    </source>
</evidence>
<evidence type="ECO:0000312" key="20">
    <source>
        <dbReference type="HGNC" id="HGNC:5959"/>
    </source>
</evidence>
<evidence type="ECO:0007744" key="21">
    <source>
        <dbReference type="PDB" id="5CQR"/>
    </source>
</evidence>
<evidence type="ECO:0007744" key="22">
    <source>
    </source>
</evidence>
<evidence type="ECO:0007744" key="23">
    <source>
    </source>
</evidence>
<evidence type="ECO:0007744" key="24">
    <source>
    </source>
</evidence>
<evidence type="ECO:0007829" key="25">
    <source>
        <dbReference type="PDB" id="5CQR"/>
    </source>
</evidence>
<evidence type="ECO:0007829" key="26">
    <source>
        <dbReference type="PDB" id="8PTX"/>
    </source>
</evidence>
<evidence type="ECO:0007829" key="27">
    <source>
        <dbReference type="PDB" id="8PTZ"/>
    </source>
</evidence>
<name>ELP1_HUMAN</name>
<dbReference type="EMBL" id="AF044195">
    <property type="protein sequence ID" value="AAC64258.1"/>
    <property type="molecule type" value="mRNA"/>
</dbReference>
<dbReference type="EMBL" id="AF153419">
    <property type="protein sequence ID" value="AAG43369.1"/>
    <property type="molecule type" value="mRNA"/>
</dbReference>
<dbReference type="EMBL" id="AK001641">
    <property type="protein sequence ID" value="BAG50955.1"/>
    <property type="molecule type" value="mRNA"/>
</dbReference>
<dbReference type="EMBL" id="AK289962">
    <property type="protein sequence ID" value="BAF82651.1"/>
    <property type="molecule type" value="mRNA"/>
</dbReference>
<dbReference type="EMBL" id="AL354797">
    <property type="status" value="NOT_ANNOTATED_CDS"/>
    <property type="molecule type" value="Genomic_DNA"/>
</dbReference>
<dbReference type="EMBL" id="AL359692">
    <property type="status" value="NOT_ANNOTATED_CDS"/>
    <property type="molecule type" value="Genomic_DNA"/>
</dbReference>
<dbReference type="EMBL" id="CH471105">
    <property type="protein sequence ID" value="EAW59027.1"/>
    <property type="molecule type" value="Genomic_DNA"/>
</dbReference>
<dbReference type="EMBL" id="AL049945">
    <property type="protein sequence ID" value="CAB43219.1"/>
    <property type="status" value="ALT_FRAME"/>
    <property type="molecule type" value="mRNA"/>
</dbReference>
<dbReference type="CCDS" id="CCDS6773.1"/>
<dbReference type="RefSeq" id="NP_001305289.1">
    <property type="nucleotide sequence ID" value="NM_001318360.1"/>
</dbReference>
<dbReference type="RefSeq" id="NP_003631.2">
    <property type="nucleotide sequence ID" value="NM_003640.4"/>
</dbReference>
<dbReference type="PDB" id="5CQR">
    <property type="method" value="X-ray"/>
    <property type="resolution" value="3.02 A"/>
    <property type="chains" value="A=715-1332"/>
</dbReference>
<dbReference type="PDB" id="8PTX">
    <property type="method" value="EM"/>
    <property type="resolution" value="2.87 A"/>
    <property type="chains" value="A/D=1-1332"/>
</dbReference>
<dbReference type="PDB" id="8PTY">
    <property type="method" value="EM"/>
    <property type="resolution" value="3.58 A"/>
    <property type="chains" value="A=1-1332"/>
</dbReference>
<dbReference type="PDB" id="8PTZ">
    <property type="method" value="EM"/>
    <property type="resolution" value="3.35 A"/>
    <property type="chains" value="A=1-1332"/>
</dbReference>
<dbReference type="PDB" id="8PU0">
    <property type="method" value="EM"/>
    <property type="resolution" value="4.25 A"/>
    <property type="chains" value="A/E=1-1332"/>
</dbReference>
<dbReference type="PDBsum" id="5CQR"/>
<dbReference type="PDBsum" id="8PTX"/>
<dbReference type="PDBsum" id="8PTY"/>
<dbReference type="PDBsum" id="8PTZ"/>
<dbReference type="PDBsum" id="8PU0"/>
<dbReference type="EMDB" id="EMD-17924"/>
<dbReference type="EMDB" id="EMD-17925"/>
<dbReference type="EMDB" id="EMD-17926"/>
<dbReference type="EMDB" id="EMD-17927"/>
<dbReference type="SMR" id="O95163"/>
<dbReference type="BioGRID" id="114090">
    <property type="interactions" value="192"/>
</dbReference>
<dbReference type="ComplexPortal" id="CPX-1949">
    <property type="entry name" value="Elongator holoenzyme complex"/>
</dbReference>
<dbReference type="CORUM" id="O95163"/>
<dbReference type="DIP" id="DIP-27579N"/>
<dbReference type="FunCoup" id="O95163">
    <property type="interactions" value="2357"/>
</dbReference>
<dbReference type="IntAct" id="O95163">
    <property type="interactions" value="64"/>
</dbReference>
<dbReference type="MINT" id="O95163"/>
<dbReference type="STRING" id="9606.ENSP00000363779"/>
<dbReference type="GlyGen" id="O95163">
    <property type="glycosylation" value="1 site, 1 O-linked glycan (1 site)"/>
</dbReference>
<dbReference type="iPTMnet" id="O95163"/>
<dbReference type="MetOSite" id="O95163"/>
<dbReference type="PhosphoSitePlus" id="O95163"/>
<dbReference type="BioMuta" id="ELP1"/>
<dbReference type="jPOST" id="O95163"/>
<dbReference type="MassIVE" id="O95163"/>
<dbReference type="PaxDb" id="9606-ENSP00000363779"/>
<dbReference type="PeptideAtlas" id="O95163"/>
<dbReference type="ProteomicsDB" id="50677"/>
<dbReference type="Pumba" id="O95163"/>
<dbReference type="Antibodypedia" id="14913">
    <property type="antibodies" value="277 antibodies from 32 providers"/>
</dbReference>
<dbReference type="DNASU" id="8518"/>
<dbReference type="Ensembl" id="ENST00000374647.10">
    <property type="protein sequence ID" value="ENSP00000363779.5"/>
    <property type="gene ID" value="ENSG00000070061.16"/>
</dbReference>
<dbReference type="Ensembl" id="ENST00000675406.1">
    <property type="protein sequence ID" value="ENSP00000501893.1"/>
    <property type="gene ID" value="ENSG00000070061.16"/>
</dbReference>
<dbReference type="GeneID" id="8518"/>
<dbReference type="KEGG" id="hsa:8518"/>
<dbReference type="MANE-Select" id="ENST00000374647.10">
    <property type="protein sequence ID" value="ENSP00000363779.5"/>
    <property type="RefSeq nucleotide sequence ID" value="NM_003640.5"/>
    <property type="RefSeq protein sequence ID" value="NP_003631.2"/>
</dbReference>
<dbReference type="UCSC" id="uc004bdm.5">
    <property type="organism name" value="human"/>
</dbReference>
<dbReference type="AGR" id="HGNC:5959"/>
<dbReference type="CTD" id="8518"/>
<dbReference type="DisGeNET" id="8518"/>
<dbReference type="GeneCards" id="ELP1"/>
<dbReference type="GeneReviews" id="ELP1"/>
<dbReference type="HGNC" id="HGNC:5959">
    <property type="gene designation" value="ELP1"/>
</dbReference>
<dbReference type="HPA" id="ENSG00000070061">
    <property type="expression patterns" value="Low tissue specificity"/>
</dbReference>
<dbReference type="MalaCards" id="ELP1"/>
<dbReference type="MIM" id="155255">
    <property type="type" value="phenotype"/>
</dbReference>
<dbReference type="MIM" id="223900">
    <property type="type" value="phenotype"/>
</dbReference>
<dbReference type="MIM" id="603722">
    <property type="type" value="gene"/>
</dbReference>
<dbReference type="neXtProt" id="NX_O95163"/>
<dbReference type="OpenTargets" id="ENSG00000070061"/>
<dbReference type="Orphanet" id="1764">
    <property type="disease" value="Familial dysautonomia"/>
</dbReference>
<dbReference type="PharmGKB" id="PA29775"/>
<dbReference type="VEuPathDB" id="HostDB:ENSG00000070061"/>
<dbReference type="eggNOG" id="KOG1920">
    <property type="taxonomic scope" value="Eukaryota"/>
</dbReference>
<dbReference type="GeneTree" id="ENSGT00390000013344"/>
<dbReference type="HOGENOM" id="CLU_001477_1_0_1"/>
<dbReference type="InParanoid" id="O95163"/>
<dbReference type="OMA" id="WRESLYC"/>
<dbReference type="OrthoDB" id="40048at2759"/>
<dbReference type="PAN-GO" id="O95163">
    <property type="GO annotations" value="4 GO annotations based on evolutionary models"/>
</dbReference>
<dbReference type="PhylomeDB" id="O95163"/>
<dbReference type="TreeFam" id="TF300402"/>
<dbReference type="BioCyc" id="MetaCyc:ENSG00000070061-MONOMER"/>
<dbReference type="PathwayCommons" id="O95163"/>
<dbReference type="Reactome" id="R-HSA-3214847">
    <property type="pathway name" value="HATs acetylate histones"/>
</dbReference>
<dbReference type="SignaLink" id="O95163"/>
<dbReference type="SIGNOR" id="O95163"/>
<dbReference type="UniPathway" id="UPA00988"/>
<dbReference type="BioGRID-ORCS" id="8518">
    <property type="hits" value="674 hits in 1139 CRISPR screens"/>
</dbReference>
<dbReference type="ChiTaRS" id="IKBKAP">
    <property type="organism name" value="human"/>
</dbReference>
<dbReference type="EvolutionaryTrace" id="O95163"/>
<dbReference type="GenomeRNAi" id="8518"/>
<dbReference type="Pharos" id="O95163">
    <property type="development level" value="Tbio"/>
</dbReference>
<dbReference type="PRO" id="PR:O95163"/>
<dbReference type="Proteomes" id="UP000005640">
    <property type="component" value="Chromosome 9"/>
</dbReference>
<dbReference type="RNAct" id="O95163">
    <property type="molecule type" value="protein"/>
</dbReference>
<dbReference type="Bgee" id="ENSG00000070061">
    <property type="expression patterns" value="Expressed in adrenal tissue and 205 other cell types or tissues"/>
</dbReference>
<dbReference type="ExpressionAtlas" id="O95163">
    <property type="expression patterns" value="baseline and differential"/>
</dbReference>
<dbReference type="GO" id="GO:0005737">
    <property type="term" value="C:cytoplasm"/>
    <property type="evidence" value="ECO:0000314"/>
    <property type="project" value="UniProtKB"/>
</dbReference>
<dbReference type="GO" id="GO:0005829">
    <property type="term" value="C:cytosol"/>
    <property type="evidence" value="ECO:0000314"/>
    <property type="project" value="HPA"/>
</dbReference>
<dbReference type="GO" id="GO:0033588">
    <property type="term" value="C:elongator holoenzyme complex"/>
    <property type="evidence" value="ECO:0000314"/>
    <property type="project" value="UniProtKB"/>
</dbReference>
<dbReference type="GO" id="GO:0005634">
    <property type="term" value="C:nucleus"/>
    <property type="evidence" value="ECO:0007669"/>
    <property type="project" value="UniProtKB-SubCell"/>
</dbReference>
<dbReference type="GO" id="GO:0000049">
    <property type="term" value="F:tRNA binding"/>
    <property type="evidence" value="ECO:0000318"/>
    <property type="project" value="GO_Central"/>
</dbReference>
<dbReference type="GO" id="GO:0006417">
    <property type="term" value="P:regulation of translation"/>
    <property type="evidence" value="ECO:0000303"/>
    <property type="project" value="ComplexPortal"/>
</dbReference>
<dbReference type="GO" id="GO:0002926">
    <property type="term" value="P:tRNA wobble base 5-methoxycarbonylmethyl-2-thiouridinylation"/>
    <property type="evidence" value="ECO:0000318"/>
    <property type="project" value="GO_Central"/>
</dbReference>
<dbReference type="GO" id="GO:0002098">
    <property type="term" value="P:tRNA wobble uridine modification"/>
    <property type="evidence" value="ECO:0000303"/>
    <property type="project" value="ComplexPortal"/>
</dbReference>
<dbReference type="FunFam" id="2.130.10.10:FF:000737">
    <property type="entry name" value="Elongator complex protein 1"/>
    <property type="match status" value="1"/>
</dbReference>
<dbReference type="Gene3D" id="2.130.10.10">
    <property type="entry name" value="YVTN repeat-like/Quinoprotein amine dehydrogenase"/>
    <property type="match status" value="1"/>
</dbReference>
<dbReference type="IDEAL" id="IID00644"/>
<dbReference type="InterPro" id="IPR056167">
    <property type="entry name" value="A-sol_ELP1"/>
</dbReference>
<dbReference type="InterPro" id="IPR006849">
    <property type="entry name" value="Elp1"/>
</dbReference>
<dbReference type="InterPro" id="IPR056165">
    <property type="entry name" value="ELP1_b-prop_2"/>
</dbReference>
<dbReference type="InterPro" id="IPR056164">
    <property type="entry name" value="ELP1_N_b-prop_1"/>
</dbReference>
<dbReference type="InterPro" id="IPR056169">
    <property type="entry name" value="HB_ELP1"/>
</dbReference>
<dbReference type="InterPro" id="IPR056166">
    <property type="entry name" value="TPR_ELP1"/>
</dbReference>
<dbReference type="InterPro" id="IPR015943">
    <property type="entry name" value="WD40/YVTN_repeat-like_dom_sf"/>
</dbReference>
<dbReference type="PANTHER" id="PTHR12747">
    <property type="entry name" value="ELONGATOR COMPLEX PROTEIN 1"/>
    <property type="match status" value="1"/>
</dbReference>
<dbReference type="PANTHER" id="PTHR12747:SF0">
    <property type="entry name" value="ELONGATOR COMPLEX PROTEIN 1"/>
    <property type="match status" value="1"/>
</dbReference>
<dbReference type="Pfam" id="PF23925">
    <property type="entry name" value="A-sol_ELP1"/>
    <property type="match status" value="1"/>
</dbReference>
<dbReference type="Pfam" id="PF04762">
    <property type="entry name" value="Beta-prop_ELP1_1st"/>
    <property type="match status" value="1"/>
</dbReference>
<dbReference type="Pfam" id="PF23797">
    <property type="entry name" value="Beta-prop_ELP1_2nd"/>
    <property type="match status" value="1"/>
</dbReference>
<dbReference type="Pfam" id="PF23936">
    <property type="entry name" value="HB_ELP1"/>
    <property type="match status" value="1"/>
</dbReference>
<dbReference type="Pfam" id="PF23878">
    <property type="entry name" value="TPR_ELP1"/>
    <property type="match status" value="1"/>
</dbReference>
<dbReference type="PIRSF" id="PIRSF017233">
    <property type="entry name" value="IKAP"/>
    <property type="match status" value="1"/>
</dbReference>
<dbReference type="SUPFAM" id="SSF69322">
    <property type="entry name" value="Tricorn protease domain 2"/>
    <property type="match status" value="1"/>
</dbReference>
<organism>
    <name type="scientific">Homo sapiens</name>
    <name type="common">Human</name>
    <dbReference type="NCBI Taxonomy" id="9606"/>
    <lineage>
        <taxon>Eukaryota</taxon>
        <taxon>Metazoa</taxon>
        <taxon>Chordata</taxon>
        <taxon>Craniata</taxon>
        <taxon>Vertebrata</taxon>
        <taxon>Euteleostomi</taxon>
        <taxon>Mammalia</taxon>
        <taxon>Eutheria</taxon>
        <taxon>Euarchontoglires</taxon>
        <taxon>Primates</taxon>
        <taxon>Haplorrhini</taxon>
        <taxon>Catarrhini</taxon>
        <taxon>Hominidae</taxon>
        <taxon>Homo</taxon>
    </lineage>
</organism>
<accession>O95163</accession>
<accession>Q5JSV2</accession>
<accession>Q9H327</accession>
<accession>Q9UG87</accession>
<comment type="function">
    <text evidence="1 2 13 14">Component of the elongator complex which is required for multiple tRNA modifications, including mcm5U (5-methoxycarbonylmethyl uridine), mcm5s2U (5-methoxycarbonylmethyl-2-thiouridine), and ncm5U (5-carbamoylmethyl uridine) (PubMed:29332244). The elongator complex catalyzes the formation of carboxymethyluridine in the wobble base at position 34 in tRNAs (PubMed:29332244). Regulates the migration and branching of projection neurons in the developing cerebral cortex, through a process depending on alpha-tubulin acetylation (By similarity). ELP1 binds to tRNA, mediating interaction of the elongator complex with tRNA (By similarity). May act as a scaffold protein that assembles active IKK-MAP3K14 complexes (IKKA, IKKB and MAP3K14/NIK) (PubMed:9751059).</text>
</comment>
<comment type="pathway">
    <text evidence="14">tRNA modification; 5-methoxycarbonylmethyl-2-thiouridine-tRNA biosynthesis.</text>
</comment>
<comment type="subunit">
    <text evidence="6 7 10 11 13">Homodimer; dimerization promotes ELP1 stability and elongator complex formation (PubMed:26261306). Component of the elongator complex which consists of ELP1, ELP2, ELP3, ELP4, ELP5 and ELP6 (PubMed:11714725, PubMed:11818576, PubMed:22854966, PubMed:25960406, PubMed:26261306). Interacts preferentially with MAP3K14/NIK followed by IKK-alpha and IKK-beta (PubMed:9751059).</text>
</comment>
<comment type="interaction">
    <interactant intactId="EBI-347559">
        <id>O95163</id>
    </interactant>
    <interactant intactId="EBI-355217">
        <id>Q9H9T3</id>
        <label>ELP3</label>
    </interactant>
    <organismsDiffer>false</organismsDiffer>
    <experiments>11</experiments>
</comment>
<comment type="interaction">
    <interactant intactId="EBI-347559">
        <id>O95163</id>
    </interactant>
    <interactant intactId="EBI-466029">
        <id>P42858</id>
        <label>HTT</label>
    </interactant>
    <organismsDiffer>false</organismsDiffer>
    <experiments>4</experiments>
</comment>
<comment type="interaction">
    <interactant intactId="EBI-347559">
        <id>O95163</id>
    </interactant>
    <interactant intactId="EBI-751345">
        <id>Q15306</id>
        <label>IRF4</label>
    </interactant>
    <organismsDiffer>false</organismsDiffer>
    <experiments>2</experiments>
</comment>
<comment type="subcellular location">
    <subcellularLocation>
        <location evidence="6 7 10">Cytoplasm</location>
    </subcellularLocation>
    <subcellularLocation>
        <location evidence="6 7">Nucleus</location>
    </subcellularLocation>
</comment>
<comment type="disease" evidence="4 5 8">
    <disease id="DI-01566">
        <name>Neuropathy, hereditary sensory and autonomic, 3</name>
        <acronym>HSAN3</acronym>
        <description>A form of hereditary sensory and autonomic neuropathy, a genetically and clinically heterogeneous group of disorders characterized by degeneration of dorsal root and autonomic ganglion cells, and by sensory and/or autonomic abnormalities. HSAN3 patients manifest a variety of symptoms such as alacrima, decreased taste, decreased sensitivity to pain and temperature, vasomotor instability, hypoactive or absent deep tendon reflexes, vomiting crises, and gastrointestinal dysfunction.</description>
        <dbReference type="MIM" id="223900"/>
    </disease>
    <text>The disease is caused by variants affecting the gene represented in this entry.</text>
</comment>
<comment type="disease" evidence="12">
    <disease id="DI-01958">
        <name>Medulloblastoma</name>
        <acronym>MDB</acronym>
        <description>Malignant, invasive embryonal tumor of the cerebellum with a preferential manifestation in children.</description>
        <dbReference type="MIM" id="155255"/>
    </disease>
    <text>Disease susceptibility is associated with variants affecting the gene represented in this entry.</text>
</comment>
<comment type="similarity">
    <text evidence="16">Belongs to the ELP1/IKA1 family.</text>
</comment>
<comment type="caution">
    <text evidence="17 18 19">The elongator complex was originally thought to play a role in transcription elongation. However, it is no longer thought to play a direct role in this process and its primary function is thought to be in tRNA modification.</text>
</comment>
<comment type="sequence caution" evidence="16">
    <conflict type="frameshift">
        <sequence resource="EMBL-CDS" id="CAB43219"/>
    </conflict>
</comment>
<keyword id="KW-0002">3D-structure</keyword>
<keyword id="KW-0963">Cytoplasm</keyword>
<keyword id="KW-0903">Direct protein sequencing</keyword>
<keyword id="KW-0225">Disease variant</keyword>
<keyword id="KW-0523">Neurodegeneration</keyword>
<keyword id="KW-0622">Neuropathy</keyword>
<keyword id="KW-0539">Nucleus</keyword>
<keyword id="KW-0597">Phosphoprotein</keyword>
<keyword id="KW-1267">Proteomics identification</keyword>
<keyword id="KW-1185">Reference proteome</keyword>
<keyword id="KW-0819">tRNA processing</keyword>